<evidence type="ECO:0000305" key="1"/>
<accession>O54459</accession>
<organism>
    <name type="scientific">Enterobacter agglomerans</name>
    <name type="common">Erwinia herbicola</name>
    <name type="synonym">Pantoea agglomerans</name>
    <dbReference type="NCBI Taxonomy" id="549"/>
    <lineage>
        <taxon>Bacteria</taxon>
        <taxon>Pseudomonadati</taxon>
        <taxon>Pseudomonadota</taxon>
        <taxon>Gammaproteobacteria</taxon>
        <taxon>Enterobacterales</taxon>
        <taxon>Erwiniaceae</taxon>
        <taxon>Pantoea</taxon>
        <taxon>Pantoea agglomerans group</taxon>
    </lineage>
</organism>
<gene>
    <name type="primary">aroH</name>
</gene>
<keyword id="KW-0028">Amino-acid biosynthesis</keyword>
<keyword id="KW-0057">Aromatic amino acid biosynthesis</keyword>
<keyword id="KW-0808">Transferase</keyword>
<name>AROH_ENTAG</name>
<comment type="function">
    <text>Stereospecific condensation of phosphoenolpyruvate (PEP) and D-erythrose-4-phosphate (E4P) giving rise to 3-deoxy-D-arabino-heptulosonate-7-phosphate (DAHP).</text>
</comment>
<comment type="catalytic activity">
    <reaction>
        <text>D-erythrose 4-phosphate + phosphoenolpyruvate + H2O = 7-phospho-2-dehydro-3-deoxy-D-arabino-heptonate + phosphate</text>
        <dbReference type="Rhea" id="RHEA:14717"/>
        <dbReference type="ChEBI" id="CHEBI:15377"/>
        <dbReference type="ChEBI" id="CHEBI:16897"/>
        <dbReference type="ChEBI" id="CHEBI:43474"/>
        <dbReference type="ChEBI" id="CHEBI:58394"/>
        <dbReference type="ChEBI" id="CHEBI:58702"/>
        <dbReference type="EC" id="2.5.1.54"/>
    </reaction>
</comment>
<comment type="pathway">
    <text>Metabolic intermediate biosynthesis; chorismate biosynthesis; chorismate from D-erythrose 4-phosphate and phosphoenolpyruvate: step 1/7.</text>
</comment>
<comment type="similarity">
    <text evidence="1">Belongs to the class-I DAHP synthase family.</text>
</comment>
<feature type="chain" id="PRO_0000140843" description="Phospho-2-dehydro-3-deoxyheptonate aldolase, Trp-sensitive">
    <location>
        <begin position="1"/>
        <end position="348"/>
    </location>
</feature>
<dbReference type="EC" id="2.5.1.54"/>
<dbReference type="EMBL" id="U93355">
    <property type="protein sequence ID" value="AAB96400.1"/>
    <property type="molecule type" value="Genomic_DNA"/>
</dbReference>
<dbReference type="SMR" id="O54459"/>
<dbReference type="STRING" id="549.BEE12_15405"/>
<dbReference type="eggNOG" id="COG0722">
    <property type="taxonomic scope" value="Bacteria"/>
</dbReference>
<dbReference type="UniPathway" id="UPA00053">
    <property type="reaction ID" value="UER00084"/>
</dbReference>
<dbReference type="GO" id="GO:0005737">
    <property type="term" value="C:cytoplasm"/>
    <property type="evidence" value="ECO:0007669"/>
    <property type="project" value="TreeGrafter"/>
</dbReference>
<dbReference type="GO" id="GO:0003849">
    <property type="term" value="F:3-deoxy-7-phosphoheptulonate synthase activity"/>
    <property type="evidence" value="ECO:0007669"/>
    <property type="project" value="UniProtKB-EC"/>
</dbReference>
<dbReference type="GO" id="GO:0008652">
    <property type="term" value="P:amino acid biosynthetic process"/>
    <property type="evidence" value="ECO:0007669"/>
    <property type="project" value="UniProtKB-KW"/>
</dbReference>
<dbReference type="GO" id="GO:0009073">
    <property type="term" value="P:aromatic amino acid family biosynthetic process"/>
    <property type="evidence" value="ECO:0007669"/>
    <property type="project" value="UniProtKB-KW"/>
</dbReference>
<dbReference type="GO" id="GO:0009423">
    <property type="term" value="P:chorismate biosynthetic process"/>
    <property type="evidence" value="ECO:0007669"/>
    <property type="project" value="UniProtKB-UniPathway"/>
</dbReference>
<dbReference type="FunFam" id="3.20.20.70:FF:000005">
    <property type="entry name" value="Phospho-2-dehydro-3-deoxyheptonate aldolase"/>
    <property type="match status" value="1"/>
</dbReference>
<dbReference type="Gene3D" id="3.20.20.70">
    <property type="entry name" value="Aldolase class I"/>
    <property type="match status" value="1"/>
</dbReference>
<dbReference type="InterPro" id="IPR013785">
    <property type="entry name" value="Aldolase_TIM"/>
</dbReference>
<dbReference type="InterPro" id="IPR006218">
    <property type="entry name" value="DAHP1/KDSA"/>
</dbReference>
<dbReference type="InterPro" id="IPR006219">
    <property type="entry name" value="DAHP_synth_1"/>
</dbReference>
<dbReference type="NCBIfam" id="TIGR00034">
    <property type="entry name" value="aroFGH"/>
    <property type="match status" value="1"/>
</dbReference>
<dbReference type="NCBIfam" id="NF009395">
    <property type="entry name" value="PRK12755.1"/>
    <property type="match status" value="1"/>
</dbReference>
<dbReference type="NCBIfam" id="NF009396">
    <property type="entry name" value="PRK12756.1"/>
    <property type="match status" value="1"/>
</dbReference>
<dbReference type="PANTHER" id="PTHR21225">
    <property type="entry name" value="PHOSPHO-2-DEHYDRO-3-DEOXYHEPTONATE ALDOLASE DAHP SYNTHETASE"/>
    <property type="match status" value="1"/>
</dbReference>
<dbReference type="PANTHER" id="PTHR21225:SF6">
    <property type="entry name" value="PHOSPHO-2-DEHYDRO-3-DEOXYHEPTONATE ALDOLASE, TRP-SENSITIVE"/>
    <property type="match status" value="1"/>
</dbReference>
<dbReference type="Pfam" id="PF00793">
    <property type="entry name" value="DAHP_synth_1"/>
    <property type="match status" value="1"/>
</dbReference>
<dbReference type="PIRSF" id="PIRSF001361">
    <property type="entry name" value="DAHP_synthase"/>
    <property type="match status" value="1"/>
</dbReference>
<dbReference type="SUPFAM" id="SSF51569">
    <property type="entry name" value="Aldolase"/>
    <property type="match status" value="1"/>
</dbReference>
<sequence>MNKTDELRTARIGSLITPPSLAAEHPVSPAIADNVTAARKRIACILTGEDHRLLVVIGPCSLHDPKAALEYAERLNALRRRYEDRLEIVMRAYFEKPRTVVGWKGLISDPDLDGSYDVNRGIGIARQLLIDINALGLPTATEFLDMVIGQFIADLISWGAIGARTTESQIHREMASALSCPVGFKNGTDGNVQIAVDAIRAARASHMFLSPDKLGQMTIYQTSGNPHGHVILRGGKQPNYHASDVAAAAESLSAFNLPQQLVIDFSHGNCLKQHRRQMDVAAEVAEQIKAGSQAVAGVMIESFLEEGNQKVVSGEPLVYGKSITDPCLGWQESEKVLALLAEAVSHRL</sequence>
<proteinExistence type="inferred from homology"/>
<protein>
    <recommendedName>
        <fullName>Phospho-2-dehydro-3-deoxyheptonate aldolase, Trp-sensitive</fullName>
        <ecNumber>2.5.1.54</ecNumber>
    </recommendedName>
    <alternativeName>
        <fullName>3-deoxy-D-arabino-heptulosonate 7-phosphate synthase</fullName>
    </alternativeName>
    <alternativeName>
        <fullName>DAHP synthase</fullName>
    </alternativeName>
    <alternativeName>
        <fullName>Phospho-2-keto-3-deoxyheptonate aldolase</fullName>
    </alternativeName>
</protein>
<reference key="1">
    <citation type="journal article" date="1998" name="J. Bacteriol.">
        <title>Substrate ambiguity of 3-deoxy-D-manno-octulosonate 8-phosphate synthase from Neisseria gonorrhoeae in the context of its membership in a protein family containing a subset of 3-deoxy-D-arabino-heptulosonate 7-phosphate synthases.</title>
        <authorList>
            <person name="Subramaniam P.S."/>
            <person name="Xie G."/>
            <person name="Xia T."/>
            <person name="Jensen R.A."/>
        </authorList>
    </citation>
    <scope>NUCLEOTIDE SEQUENCE [GENOMIC DNA]</scope>
</reference>